<accession>Q6G9Q8</accession>
<name>BSAA_STAAS</name>
<dbReference type="EMBL" id="BX571857">
    <property type="protein sequence ID" value="CAG43016.1"/>
    <property type="molecule type" value="Genomic_DNA"/>
</dbReference>
<dbReference type="RefSeq" id="WP_000448078.1">
    <property type="nucleotide sequence ID" value="NC_002953.3"/>
</dbReference>
<dbReference type="SMR" id="Q6G9Q8"/>
<dbReference type="KEGG" id="sas:SAS1238"/>
<dbReference type="HOGENOM" id="CLU_029507_2_2_9"/>
<dbReference type="GO" id="GO:0004601">
    <property type="term" value="F:peroxidase activity"/>
    <property type="evidence" value="ECO:0007669"/>
    <property type="project" value="UniProtKB-KW"/>
</dbReference>
<dbReference type="GO" id="GO:0034599">
    <property type="term" value="P:cellular response to oxidative stress"/>
    <property type="evidence" value="ECO:0007669"/>
    <property type="project" value="TreeGrafter"/>
</dbReference>
<dbReference type="CDD" id="cd00340">
    <property type="entry name" value="GSH_Peroxidase"/>
    <property type="match status" value="1"/>
</dbReference>
<dbReference type="FunFam" id="3.40.30.10:FF:000010">
    <property type="entry name" value="Glutathione peroxidase"/>
    <property type="match status" value="1"/>
</dbReference>
<dbReference type="Gene3D" id="3.40.30.10">
    <property type="entry name" value="Glutaredoxin"/>
    <property type="match status" value="1"/>
</dbReference>
<dbReference type="InterPro" id="IPR000889">
    <property type="entry name" value="Glutathione_peroxidase"/>
</dbReference>
<dbReference type="InterPro" id="IPR029760">
    <property type="entry name" value="GPX_CS"/>
</dbReference>
<dbReference type="InterPro" id="IPR036249">
    <property type="entry name" value="Thioredoxin-like_sf"/>
</dbReference>
<dbReference type="PANTHER" id="PTHR11592">
    <property type="entry name" value="GLUTATHIONE PEROXIDASE"/>
    <property type="match status" value="1"/>
</dbReference>
<dbReference type="PANTHER" id="PTHR11592:SF78">
    <property type="entry name" value="GLUTATHIONE PEROXIDASE"/>
    <property type="match status" value="1"/>
</dbReference>
<dbReference type="Pfam" id="PF00255">
    <property type="entry name" value="GSHPx"/>
    <property type="match status" value="1"/>
</dbReference>
<dbReference type="PIRSF" id="PIRSF000303">
    <property type="entry name" value="Glutathion_perox"/>
    <property type="match status" value="1"/>
</dbReference>
<dbReference type="PRINTS" id="PR01011">
    <property type="entry name" value="GLUTPROXDASE"/>
</dbReference>
<dbReference type="SUPFAM" id="SSF52833">
    <property type="entry name" value="Thioredoxin-like"/>
    <property type="match status" value="1"/>
</dbReference>
<dbReference type="PROSITE" id="PS00763">
    <property type="entry name" value="GLUTATHIONE_PEROXID_2"/>
    <property type="match status" value="1"/>
</dbReference>
<dbReference type="PROSITE" id="PS51355">
    <property type="entry name" value="GLUTATHIONE_PEROXID_3"/>
    <property type="match status" value="1"/>
</dbReference>
<gene>
    <name type="primary">bsaA</name>
    <name type="ordered locus">SAS1238</name>
</gene>
<feature type="chain" id="PRO_0000066654" description="Glutathione peroxidase homolog BsaA">
    <location>
        <begin position="1"/>
        <end position="158"/>
    </location>
</feature>
<feature type="active site" evidence="1">
    <location>
        <position position="36"/>
    </location>
</feature>
<organism>
    <name type="scientific">Staphylococcus aureus (strain MSSA476)</name>
    <dbReference type="NCBI Taxonomy" id="282459"/>
    <lineage>
        <taxon>Bacteria</taxon>
        <taxon>Bacillati</taxon>
        <taxon>Bacillota</taxon>
        <taxon>Bacilli</taxon>
        <taxon>Bacillales</taxon>
        <taxon>Staphylococcaceae</taxon>
        <taxon>Staphylococcus</taxon>
    </lineage>
</organism>
<sequence>METIYDFVVETNKGVTYKLDAYKGDVMLIVNTASECGFTSQFEGLQSLYEKYKDQGFVILGFPCNQFGGQEPGSGEEAAQNCKLNYGVTFPMHQKIDVKGEHQLPLFRYLTAAQHGFFNEKIKWNFTKFLVDREGNVVKRFAPQKKPVQIEREIEKLL</sequence>
<reference key="1">
    <citation type="journal article" date="2004" name="Proc. Natl. Acad. Sci. U.S.A.">
        <title>Complete genomes of two clinical Staphylococcus aureus strains: evidence for the rapid evolution of virulence and drug resistance.</title>
        <authorList>
            <person name="Holden M.T.G."/>
            <person name="Feil E.J."/>
            <person name="Lindsay J.A."/>
            <person name="Peacock S.J."/>
            <person name="Day N.P.J."/>
            <person name="Enright M.C."/>
            <person name="Foster T.J."/>
            <person name="Moore C.E."/>
            <person name="Hurst L."/>
            <person name="Atkin R."/>
            <person name="Barron A."/>
            <person name="Bason N."/>
            <person name="Bentley S.D."/>
            <person name="Chillingworth C."/>
            <person name="Chillingworth T."/>
            <person name="Churcher C."/>
            <person name="Clark L."/>
            <person name="Corton C."/>
            <person name="Cronin A."/>
            <person name="Doggett J."/>
            <person name="Dowd L."/>
            <person name="Feltwell T."/>
            <person name="Hance Z."/>
            <person name="Harris B."/>
            <person name="Hauser H."/>
            <person name="Holroyd S."/>
            <person name="Jagels K."/>
            <person name="James K.D."/>
            <person name="Lennard N."/>
            <person name="Line A."/>
            <person name="Mayes R."/>
            <person name="Moule S."/>
            <person name="Mungall K."/>
            <person name="Ormond D."/>
            <person name="Quail M.A."/>
            <person name="Rabbinowitsch E."/>
            <person name="Rutherford K.M."/>
            <person name="Sanders M."/>
            <person name="Sharp S."/>
            <person name="Simmonds M."/>
            <person name="Stevens K."/>
            <person name="Whitehead S."/>
            <person name="Barrell B.G."/>
            <person name="Spratt B.G."/>
            <person name="Parkhill J."/>
        </authorList>
    </citation>
    <scope>NUCLEOTIDE SEQUENCE [LARGE SCALE GENOMIC DNA]</scope>
    <source>
        <strain>MSSA476</strain>
    </source>
</reference>
<evidence type="ECO:0000250" key="1"/>
<evidence type="ECO:0000305" key="2"/>
<protein>
    <recommendedName>
        <fullName>Glutathione peroxidase homolog BsaA</fullName>
    </recommendedName>
</protein>
<keyword id="KW-0560">Oxidoreductase</keyword>
<keyword id="KW-0575">Peroxidase</keyword>
<comment type="similarity">
    <text evidence="2">Belongs to the glutathione peroxidase family.</text>
</comment>
<proteinExistence type="inferred from homology"/>